<name>Y3666_ECOL6</name>
<dbReference type="EMBL" id="AE014075">
    <property type="protein sequence ID" value="AAN82114.1"/>
    <property type="molecule type" value="Genomic_DNA"/>
</dbReference>
<dbReference type="RefSeq" id="WP_001119727.1">
    <property type="nucleotide sequence ID" value="NZ_CP051263.1"/>
</dbReference>
<dbReference type="SMR" id="Q8FDS2"/>
<dbReference type="STRING" id="199310.c3666"/>
<dbReference type="KEGG" id="ecc:c3666"/>
<dbReference type="eggNOG" id="ENOG50332RS">
    <property type="taxonomic scope" value="Bacteria"/>
</dbReference>
<dbReference type="HOGENOM" id="CLU_182912_0_0_6"/>
<dbReference type="BioCyc" id="ECOL199310:C3666-MONOMER"/>
<dbReference type="Proteomes" id="UP000001410">
    <property type="component" value="Chromosome"/>
</dbReference>
<dbReference type="Gene3D" id="3.30.160.130">
    <property type="entry name" value="ykff protein like domains"/>
    <property type="match status" value="1"/>
</dbReference>
<dbReference type="InterPro" id="IPR009253">
    <property type="entry name" value="DUF905"/>
</dbReference>
<dbReference type="InterPro" id="IPR038612">
    <property type="entry name" value="YkfF-like_sf"/>
</dbReference>
<dbReference type="Pfam" id="PF06006">
    <property type="entry name" value="DUF905"/>
    <property type="match status" value="1"/>
</dbReference>
<dbReference type="SUPFAM" id="SSF54786">
    <property type="entry name" value="YcfA/nrd intein domain"/>
    <property type="match status" value="1"/>
</dbReference>
<gene>
    <name type="ordered locus">c3666</name>
</gene>
<organism>
    <name type="scientific">Escherichia coli O6:H1 (strain CFT073 / ATCC 700928 / UPEC)</name>
    <dbReference type="NCBI Taxonomy" id="199310"/>
    <lineage>
        <taxon>Bacteria</taxon>
        <taxon>Pseudomonadati</taxon>
        <taxon>Pseudomonadota</taxon>
        <taxon>Gammaproteobacteria</taxon>
        <taxon>Enterobacterales</taxon>
        <taxon>Enterobacteriaceae</taxon>
        <taxon>Escherichia</taxon>
    </lineage>
</organism>
<feature type="chain" id="PRO_0000268746" description="UPF0401 protein c3666">
    <location>
        <begin position="1"/>
        <end position="77"/>
    </location>
</feature>
<sequence length="77" mass="8722">MPGYTEYVLAEGSFSYGQAVAVITAYRNVFIQDDPGMHFRRVIRNAEGQRRWRCRNSEADAGKQLNAWLASGGLLRQ</sequence>
<proteinExistence type="inferred from homology"/>
<comment type="similarity">
    <text evidence="1">Belongs to the UPF0401 family.</text>
</comment>
<reference key="1">
    <citation type="journal article" date="2002" name="Proc. Natl. Acad. Sci. U.S.A.">
        <title>Extensive mosaic structure revealed by the complete genome sequence of uropathogenic Escherichia coli.</title>
        <authorList>
            <person name="Welch R.A."/>
            <person name="Burland V."/>
            <person name="Plunkett G. III"/>
            <person name="Redford P."/>
            <person name="Roesch P."/>
            <person name="Rasko D."/>
            <person name="Buckles E.L."/>
            <person name="Liou S.-R."/>
            <person name="Boutin A."/>
            <person name="Hackett J."/>
            <person name="Stroud D."/>
            <person name="Mayhew G.F."/>
            <person name="Rose D.J."/>
            <person name="Zhou S."/>
            <person name="Schwartz D.C."/>
            <person name="Perna N.T."/>
            <person name="Mobley H.L.T."/>
            <person name="Donnenberg M.S."/>
            <person name="Blattner F.R."/>
        </authorList>
    </citation>
    <scope>NUCLEOTIDE SEQUENCE [LARGE SCALE GENOMIC DNA]</scope>
    <source>
        <strain>CFT073 / ATCC 700928 / UPEC</strain>
    </source>
</reference>
<evidence type="ECO:0000305" key="1"/>
<protein>
    <recommendedName>
        <fullName>UPF0401 protein c3666</fullName>
    </recommendedName>
</protein>
<keyword id="KW-1185">Reference proteome</keyword>
<accession>Q8FDS2</accession>